<feature type="chain" id="PRO_1000133696" description="DNA replication and repair protein RecF">
    <location>
        <begin position="1"/>
        <end position="410"/>
    </location>
</feature>
<feature type="binding site" evidence="1">
    <location>
        <begin position="30"/>
        <end position="37"/>
    </location>
    <ligand>
        <name>ATP</name>
        <dbReference type="ChEBI" id="CHEBI:30616"/>
    </ligand>
</feature>
<reference key="1">
    <citation type="submission" date="2009-03" db="EMBL/GenBank/DDBJ databases">
        <title>Comparison of the complete genome sequences of Rhodococcus erythropolis PR4 and Rhodococcus opacus B4.</title>
        <authorList>
            <person name="Takarada H."/>
            <person name="Sekine M."/>
            <person name="Hosoyama A."/>
            <person name="Yamada R."/>
            <person name="Fujisawa T."/>
            <person name="Omata S."/>
            <person name="Shimizu A."/>
            <person name="Tsukatani N."/>
            <person name="Tanikawa S."/>
            <person name="Fujita N."/>
            <person name="Harayama S."/>
        </authorList>
    </citation>
    <scope>NUCLEOTIDE SEQUENCE [LARGE SCALE GENOMIC DNA]</scope>
    <source>
        <strain>B4</strain>
    </source>
</reference>
<proteinExistence type="inferred from homology"/>
<name>RECF_RHOOB</name>
<comment type="function">
    <text evidence="1">The RecF protein is involved in DNA metabolism; it is required for DNA replication and normal SOS inducibility. RecF binds preferentially to single-stranded, linear DNA. It also seems to bind ATP.</text>
</comment>
<comment type="subcellular location">
    <subcellularLocation>
        <location evidence="1">Cytoplasm</location>
    </subcellularLocation>
</comment>
<comment type="similarity">
    <text evidence="1">Belongs to the RecF family.</text>
</comment>
<sequence length="410" mass="44803">MFVRALSLRDFRSWDALGLNLRPGCTVFVGPNGHGKTNVLEALGYLSTLSSHRVSSDAPLIRTGTAQAFAGATVVNTGRELTVDLELNEGKSNRARINQSPTRRPREILGILQTVLFAPEDLSLVRGDPGDRRRYLDELLTSRIPRMAAVRADYERVLRQRSALLKTAGGALRRSSRGGGRPSEDGASALATLEVWDGHLAAHGAQLLAGRLHLVHDLAPHLAESYQSLAPESRPASIRYRSSLGSSLPPEFTAPARAPEAGDIAFLEERFLQELSVMRSKEIERGVCLVGPHRDDLELHLGDTPAKGFASHGESWSFALSLRLAGFALLRADGSDPVLMLDDVFAELDRKRRRALAKVALDAEQVLITAAVPEDVPEELDAVRFGVEARDTDRGRISHILEETEDRRDG</sequence>
<accession>C1B7T0</accession>
<protein>
    <recommendedName>
        <fullName evidence="1">DNA replication and repair protein RecF</fullName>
    </recommendedName>
</protein>
<keyword id="KW-0067">ATP-binding</keyword>
<keyword id="KW-0963">Cytoplasm</keyword>
<keyword id="KW-0227">DNA damage</keyword>
<keyword id="KW-0234">DNA repair</keyword>
<keyword id="KW-0235">DNA replication</keyword>
<keyword id="KW-0238">DNA-binding</keyword>
<keyword id="KW-0547">Nucleotide-binding</keyword>
<keyword id="KW-0742">SOS response</keyword>
<gene>
    <name evidence="1" type="primary">recF</name>
    <name type="ordered locus">ROP_34860</name>
</gene>
<evidence type="ECO:0000255" key="1">
    <source>
        <dbReference type="HAMAP-Rule" id="MF_00365"/>
    </source>
</evidence>
<dbReference type="EMBL" id="AP011115">
    <property type="protein sequence ID" value="BAH51733.1"/>
    <property type="molecule type" value="Genomic_DNA"/>
</dbReference>
<dbReference type="RefSeq" id="WP_012690679.1">
    <property type="nucleotide sequence ID" value="NC_012522.1"/>
</dbReference>
<dbReference type="SMR" id="C1B7T0"/>
<dbReference type="STRING" id="632772.ROP_34860"/>
<dbReference type="KEGG" id="rop:ROP_34860"/>
<dbReference type="PATRIC" id="fig|632772.20.peg.3651"/>
<dbReference type="HOGENOM" id="CLU_040267_1_1_11"/>
<dbReference type="OrthoDB" id="9803889at2"/>
<dbReference type="Proteomes" id="UP000002212">
    <property type="component" value="Chromosome"/>
</dbReference>
<dbReference type="GO" id="GO:0005737">
    <property type="term" value="C:cytoplasm"/>
    <property type="evidence" value="ECO:0007669"/>
    <property type="project" value="UniProtKB-SubCell"/>
</dbReference>
<dbReference type="GO" id="GO:0005524">
    <property type="term" value="F:ATP binding"/>
    <property type="evidence" value="ECO:0007669"/>
    <property type="project" value="UniProtKB-UniRule"/>
</dbReference>
<dbReference type="GO" id="GO:0003697">
    <property type="term" value="F:single-stranded DNA binding"/>
    <property type="evidence" value="ECO:0007669"/>
    <property type="project" value="UniProtKB-UniRule"/>
</dbReference>
<dbReference type="GO" id="GO:0006260">
    <property type="term" value="P:DNA replication"/>
    <property type="evidence" value="ECO:0007669"/>
    <property type="project" value="UniProtKB-UniRule"/>
</dbReference>
<dbReference type="GO" id="GO:0000731">
    <property type="term" value="P:DNA synthesis involved in DNA repair"/>
    <property type="evidence" value="ECO:0007669"/>
    <property type="project" value="TreeGrafter"/>
</dbReference>
<dbReference type="GO" id="GO:0006302">
    <property type="term" value="P:double-strand break repair"/>
    <property type="evidence" value="ECO:0007669"/>
    <property type="project" value="TreeGrafter"/>
</dbReference>
<dbReference type="GO" id="GO:0009432">
    <property type="term" value="P:SOS response"/>
    <property type="evidence" value="ECO:0007669"/>
    <property type="project" value="UniProtKB-UniRule"/>
</dbReference>
<dbReference type="Gene3D" id="3.40.50.300">
    <property type="entry name" value="P-loop containing nucleotide triphosphate hydrolases"/>
    <property type="match status" value="1"/>
</dbReference>
<dbReference type="Gene3D" id="1.20.1050.90">
    <property type="entry name" value="RecF/RecN/SMC, N-terminal domain"/>
    <property type="match status" value="1"/>
</dbReference>
<dbReference type="HAMAP" id="MF_00365">
    <property type="entry name" value="RecF"/>
    <property type="match status" value="1"/>
</dbReference>
<dbReference type="InterPro" id="IPR001238">
    <property type="entry name" value="DNA-binding_RecF"/>
</dbReference>
<dbReference type="InterPro" id="IPR018078">
    <property type="entry name" value="DNA-binding_RecF_CS"/>
</dbReference>
<dbReference type="InterPro" id="IPR027417">
    <property type="entry name" value="P-loop_NTPase"/>
</dbReference>
<dbReference type="InterPro" id="IPR003395">
    <property type="entry name" value="RecF/RecN/SMC_N"/>
</dbReference>
<dbReference type="InterPro" id="IPR042174">
    <property type="entry name" value="RecF_2"/>
</dbReference>
<dbReference type="NCBIfam" id="TIGR00611">
    <property type="entry name" value="recf"/>
    <property type="match status" value="1"/>
</dbReference>
<dbReference type="PANTHER" id="PTHR32182">
    <property type="entry name" value="DNA REPLICATION AND REPAIR PROTEIN RECF"/>
    <property type="match status" value="1"/>
</dbReference>
<dbReference type="PANTHER" id="PTHR32182:SF0">
    <property type="entry name" value="DNA REPLICATION AND REPAIR PROTEIN RECF"/>
    <property type="match status" value="1"/>
</dbReference>
<dbReference type="Pfam" id="PF02463">
    <property type="entry name" value="SMC_N"/>
    <property type="match status" value="1"/>
</dbReference>
<dbReference type="SUPFAM" id="SSF52540">
    <property type="entry name" value="P-loop containing nucleoside triphosphate hydrolases"/>
    <property type="match status" value="1"/>
</dbReference>
<dbReference type="PROSITE" id="PS00617">
    <property type="entry name" value="RECF_1"/>
    <property type="match status" value="1"/>
</dbReference>
<dbReference type="PROSITE" id="PS00618">
    <property type="entry name" value="RECF_2"/>
    <property type="match status" value="1"/>
</dbReference>
<organism>
    <name type="scientific">Rhodococcus opacus (strain B4)</name>
    <dbReference type="NCBI Taxonomy" id="632772"/>
    <lineage>
        <taxon>Bacteria</taxon>
        <taxon>Bacillati</taxon>
        <taxon>Actinomycetota</taxon>
        <taxon>Actinomycetes</taxon>
        <taxon>Mycobacteriales</taxon>
        <taxon>Nocardiaceae</taxon>
        <taxon>Rhodococcus</taxon>
    </lineage>
</organism>